<protein>
    <recommendedName>
        <fullName>Carboxypeptidase E</fullName>
        <shortName>CPE</shortName>
        <ecNumber>3.4.17.10</ecNumber>
    </recommendedName>
    <alternativeName>
        <fullName>Carboxypeptidase H</fullName>
        <shortName>CPH</shortName>
    </alternativeName>
    <alternativeName>
        <fullName>Enkephalin convertase</fullName>
    </alternativeName>
    <alternativeName>
        <fullName>Prohormone-processing carboxypeptidase</fullName>
    </alternativeName>
</protein>
<accession>P04836</accession>
<accession>A5PJN4</accession>
<accession>Q52S88</accession>
<accession>Q6YI55</accession>
<reference key="1">
    <citation type="submission" date="2007-06" db="EMBL/GenBank/DDBJ databases">
        <authorList>
            <consortium name="NIH - Mammalian Gene Collection (MGC) project"/>
        </authorList>
    </citation>
    <scope>NUCLEOTIDE SEQUENCE [LARGE SCALE MRNA]</scope>
    <source>
        <strain>Hereford</strain>
        <tissue>Uterus</tissue>
    </source>
</reference>
<reference key="2">
    <citation type="journal article" date="1986" name="Nature">
        <title>Cloning and sequence analysis of cDNA for bovine carboxypeptidase E.</title>
        <authorList>
            <person name="Fricker L.D."/>
            <person name="Evans C.J."/>
            <person name="Esch F.S."/>
            <person name="Herbert E."/>
        </authorList>
    </citation>
    <scope>NUCLEOTIDE SEQUENCE [MRNA] OF 42-475</scope>
</reference>
<reference key="3">
    <citation type="journal article" date="1990" name="Biochem. J.">
        <title>Identification and characterization of glycoproteins after extraction of bovine chromaffin-granule membranes with lithium di-iodosalicylate. Purification of glycoprotein II from the soluble fraction.</title>
        <authorList>
            <person name="Christie D.L."/>
            <person name="Palmer D.J."/>
        </authorList>
    </citation>
    <scope>PROTEIN SEQUENCE OF 42-51</scope>
</reference>
<reference key="4">
    <citation type="submission" date="2002-09" db="EMBL/GenBank/DDBJ databases">
        <title>Mapping and mutation analysis of bovine candidate genes for meat/carcass traits.</title>
        <authorList>
            <person name="Haegeman A."/>
            <person name="Williams J.L."/>
            <person name="Law A."/>
            <person name="van Zeveren A."/>
            <person name="Peelman L."/>
        </authorList>
    </citation>
    <scope>NUCLEOTIDE SEQUENCE [GENOMIC DNA] OF 242-313</scope>
    <scope>VARIANT HIS-255</scope>
</reference>
<reference key="5">
    <citation type="submission" date="2005-03" db="EMBL/GenBank/DDBJ databases">
        <title>Detection of single nucleotide polymorphisms of carboxypeptidase E (CPE) gene in Korean cattle.</title>
        <authorList>
            <person name="Chung E.R."/>
            <person name="Shin S.C."/>
            <person name="Kim W.T."/>
        </authorList>
    </citation>
    <scope>NUCLEOTIDE SEQUENCE [GENOMIC DNA] OF 242-313</scope>
    <source>
        <strain>Korean</strain>
    </source>
</reference>
<feature type="signal peptide" evidence="4">
    <location>
        <begin position="1"/>
        <end position="27"/>
    </location>
</feature>
<feature type="propeptide" id="PRO_0000308381" description="Activation peptide" evidence="6">
    <location>
        <begin position="28"/>
        <end position="41"/>
    </location>
</feature>
<feature type="chain" id="PRO_0000212785" description="Carboxypeptidase E">
    <location>
        <begin position="42"/>
        <end position="475"/>
    </location>
</feature>
<feature type="domain" description="Peptidase M14" evidence="5">
    <location>
        <begin position="51"/>
        <end position="371"/>
    </location>
</feature>
<feature type="active site" description="Proton donor/acceptor" evidence="5">
    <location>
        <position position="341"/>
    </location>
</feature>
<feature type="binding site" evidence="5">
    <location>
        <position position="113"/>
    </location>
    <ligand>
        <name>Zn(2+)</name>
        <dbReference type="ChEBI" id="CHEBI:29105"/>
        <note>catalytic</note>
    </ligand>
</feature>
<feature type="binding site" evidence="5">
    <location>
        <position position="116"/>
    </location>
    <ligand>
        <name>Zn(2+)</name>
        <dbReference type="ChEBI" id="CHEBI:29105"/>
        <note>catalytic</note>
    </ligand>
</feature>
<feature type="binding site" evidence="5">
    <location>
        <position position="247"/>
    </location>
    <ligand>
        <name>Zn(2+)</name>
        <dbReference type="ChEBI" id="CHEBI:29105"/>
        <note>catalytic</note>
    </ligand>
</feature>
<feature type="glycosylation site" description="N-linked (GlcNAc...) asparagine" evidence="4">
    <location>
        <position position="138"/>
    </location>
</feature>
<feature type="glycosylation site" description="N-linked (GlcNAc...) asparagine" evidence="4">
    <location>
        <position position="389"/>
    </location>
</feature>
<feature type="sequence variant" evidence="7">
    <original>Y</original>
    <variation>H</variation>
    <location>
        <position position="255"/>
    </location>
</feature>
<feature type="sequence conflict" description="In Ref. 3; AA sequence." evidence="8" ref="3">
    <original>E</original>
    <variation>G</variation>
    <location>
        <position position="51"/>
    </location>
</feature>
<organism>
    <name type="scientific">Bos taurus</name>
    <name type="common">Bovine</name>
    <dbReference type="NCBI Taxonomy" id="9913"/>
    <lineage>
        <taxon>Eukaryota</taxon>
        <taxon>Metazoa</taxon>
        <taxon>Chordata</taxon>
        <taxon>Craniata</taxon>
        <taxon>Vertebrata</taxon>
        <taxon>Euteleostomi</taxon>
        <taxon>Mammalia</taxon>
        <taxon>Eutheria</taxon>
        <taxon>Laurasiatheria</taxon>
        <taxon>Artiodactyla</taxon>
        <taxon>Ruminantia</taxon>
        <taxon>Pecora</taxon>
        <taxon>Bovidae</taxon>
        <taxon>Bovinae</taxon>
        <taxon>Bos</taxon>
    </lineage>
</organism>
<comment type="function">
    <text evidence="3">Sorting receptor that directs prohormones to the regulated secretory pathway. Also acts as a prohormone processing enzyme in neuro/endocrine cells, removing dibasic residues from the C-terminal end of peptide hormone precursors after initial endoprotease cleavage.</text>
</comment>
<comment type="catalytic activity">
    <reaction>
        <text>Release of C-terminal arginine or lysine residues from polypeptides.</text>
        <dbReference type="EC" id="3.4.17.10"/>
    </reaction>
</comment>
<comment type="cofactor">
    <cofactor evidence="1">
        <name>Zn(2+)</name>
        <dbReference type="ChEBI" id="CHEBI:29105"/>
    </cofactor>
    <text evidence="1">Binds 1 zinc ion per subunit.</text>
</comment>
<comment type="subunit">
    <text evidence="3">Interacts with secretogranin III/SCG3.</text>
</comment>
<comment type="subcellular location">
    <subcellularLocation>
        <location evidence="3">Cytoplasmic vesicle</location>
        <location evidence="3">Secretory vesicle</location>
    </subcellularLocation>
    <subcellularLocation>
        <location evidence="2">Cytoplasmic vesicle</location>
        <location evidence="2">Secretory vesicle membrane</location>
        <topology evidence="2">Peripheral membrane protein</topology>
    </subcellularLocation>
    <subcellularLocation>
        <location evidence="2">Secreted</location>
    </subcellularLocation>
    <text evidence="3">Associated with the secretory granule membrane through direct binding to lipid rafts in intragranular conditions.</text>
</comment>
<comment type="similarity">
    <text evidence="8">Belongs to the peptidase M14 family.</text>
</comment>
<name>CBPE_BOVIN</name>
<sequence>MARRGGCALLVLCGSLAACAWLLGAEARGPGGPVAGARRRRRPQEDGISFEYHRYPELREALVSVWLQCAAVSRIYTVGRSFEGRELLVLELSDNPGVHEPGEPEFKYIGNMHGNEAVGRELLIFLAQYLCNEYQKGNETIVQLIHNTRIHIMPSLNPDGFEKAASQLGELKDWFVGRSNAQGIDLNRNFPDLDRIVYINEKEGGPNNHLLKNLKKIVDQNTKLAPETKAVIHWIMDIPFVLSANLHGGDLVANYPYDETRSGSAHEYSSCPDDDIFQSLARAYSSFNPPMSDPDRPPCRKNDDDSSFVEGTTNGAAWYSVPGGMQDFNYLSSNCFEITVELSCEKFPPEETLKNYWEDNKNSLISYIQQIHRGVKGFVRDLQGNPIANATLSVEGIDHDVTSAKDGDYWRLLVPGNYKLTASAPGYLAIAKKVAVPYSPAVRVDFELESFSERKEEEKEELMEWWKMMSETLNF</sequence>
<proteinExistence type="evidence at protein level"/>
<dbReference type="EC" id="3.4.17.10"/>
<dbReference type="EMBL" id="BC142181">
    <property type="protein sequence ID" value="AAI42182.1"/>
    <property type="molecule type" value="mRNA"/>
</dbReference>
<dbReference type="EMBL" id="X04411">
    <property type="protein sequence ID" value="CAA27999.1"/>
    <property type="molecule type" value="mRNA"/>
</dbReference>
<dbReference type="EMBL" id="AH012367">
    <property type="protein sequence ID" value="AAO03557.1"/>
    <property type="molecule type" value="Genomic_DNA"/>
</dbReference>
<dbReference type="EMBL" id="AH014826">
    <property type="protein sequence ID" value="AAX84651.1"/>
    <property type="molecule type" value="Genomic_DNA"/>
</dbReference>
<dbReference type="PIR" id="A24327">
    <property type="entry name" value="A24327"/>
</dbReference>
<dbReference type="RefSeq" id="NP_776328.2">
    <property type="nucleotide sequence ID" value="NM_173903.4"/>
</dbReference>
<dbReference type="SMR" id="P04836"/>
<dbReference type="FunCoup" id="P04836">
    <property type="interactions" value="1244"/>
</dbReference>
<dbReference type="STRING" id="9913.ENSBTAP00000021955"/>
<dbReference type="MEROPS" id="M14.005"/>
<dbReference type="GlyCosmos" id="P04836">
    <property type="glycosylation" value="2 sites, No reported glycans"/>
</dbReference>
<dbReference type="GlyGen" id="P04836">
    <property type="glycosylation" value="2 sites"/>
</dbReference>
<dbReference type="PaxDb" id="9913-ENSBTAP00000021955"/>
<dbReference type="Ensembl" id="ENSBTAT00000021955.6">
    <property type="protein sequence ID" value="ENSBTAP00000021955.5"/>
    <property type="gene ID" value="ENSBTAG00000016514.6"/>
</dbReference>
<dbReference type="GeneID" id="280753"/>
<dbReference type="KEGG" id="bta:280753"/>
<dbReference type="CTD" id="1363"/>
<dbReference type="VEuPathDB" id="HostDB:ENSBTAG00000016514"/>
<dbReference type="VGNC" id="VGNC:27648">
    <property type="gene designation" value="CPE"/>
</dbReference>
<dbReference type="eggNOG" id="KOG2649">
    <property type="taxonomic scope" value="Eukaryota"/>
</dbReference>
<dbReference type="GeneTree" id="ENSGT00940000157158"/>
<dbReference type="HOGENOM" id="CLU_006722_1_3_1"/>
<dbReference type="InParanoid" id="P04836"/>
<dbReference type="OMA" id="FEYHRYA"/>
<dbReference type="OrthoDB" id="10249045at2759"/>
<dbReference type="TreeFam" id="TF315592"/>
<dbReference type="Proteomes" id="UP000009136">
    <property type="component" value="Chromosome 17"/>
</dbReference>
<dbReference type="Bgee" id="ENSBTAG00000016514">
    <property type="expression patterns" value="Expressed in occipital lobe and 103 other cell types or tissues"/>
</dbReference>
<dbReference type="GO" id="GO:0005615">
    <property type="term" value="C:extracellular space"/>
    <property type="evidence" value="ECO:0000318"/>
    <property type="project" value="GO_Central"/>
</dbReference>
<dbReference type="GO" id="GO:0005794">
    <property type="term" value="C:Golgi apparatus"/>
    <property type="evidence" value="ECO:0007669"/>
    <property type="project" value="Ensembl"/>
</dbReference>
<dbReference type="GO" id="GO:0030667">
    <property type="term" value="C:secretory granule membrane"/>
    <property type="evidence" value="ECO:0007669"/>
    <property type="project" value="Ensembl"/>
</dbReference>
<dbReference type="GO" id="GO:0030658">
    <property type="term" value="C:transport vesicle membrane"/>
    <property type="evidence" value="ECO:0007669"/>
    <property type="project" value="UniProtKB-SubCell"/>
</dbReference>
<dbReference type="GO" id="GO:0050839">
    <property type="term" value="F:cell adhesion molecule binding"/>
    <property type="evidence" value="ECO:0007669"/>
    <property type="project" value="Ensembl"/>
</dbReference>
<dbReference type="GO" id="GO:0004181">
    <property type="term" value="F:metallocarboxypeptidase activity"/>
    <property type="evidence" value="ECO:0000318"/>
    <property type="project" value="GO_Central"/>
</dbReference>
<dbReference type="GO" id="GO:0042043">
    <property type="term" value="F:neurexin family protein binding"/>
    <property type="evidence" value="ECO:0007669"/>
    <property type="project" value="Ensembl"/>
</dbReference>
<dbReference type="GO" id="GO:0008270">
    <property type="term" value="F:zinc ion binding"/>
    <property type="evidence" value="ECO:0007669"/>
    <property type="project" value="InterPro"/>
</dbReference>
<dbReference type="GO" id="GO:0003214">
    <property type="term" value="P:cardiac left ventricle morphogenesis"/>
    <property type="evidence" value="ECO:0007669"/>
    <property type="project" value="Ensembl"/>
</dbReference>
<dbReference type="GO" id="GO:0030070">
    <property type="term" value="P:insulin processing"/>
    <property type="evidence" value="ECO:0007669"/>
    <property type="project" value="Ensembl"/>
</dbReference>
<dbReference type="GO" id="GO:0030072">
    <property type="term" value="P:peptide hormone secretion"/>
    <property type="evidence" value="ECO:0007669"/>
    <property type="project" value="Ensembl"/>
</dbReference>
<dbReference type="GO" id="GO:0006518">
    <property type="term" value="P:peptide metabolic process"/>
    <property type="evidence" value="ECO:0000318"/>
    <property type="project" value="GO_Central"/>
</dbReference>
<dbReference type="GO" id="GO:0072657">
    <property type="term" value="P:protein localization to membrane"/>
    <property type="evidence" value="ECO:0007669"/>
    <property type="project" value="Ensembl"/>
</dbReference>
<dbReference type="GO" id="GO:0033366">
    <property type="term" value="P:protein localization to secretory granule"/>
    <property type="evidence" value="ECO:0007669"/>
    <property type="project" value="Ensembl"/>
</dbReference>
<dbReference type="GO" id="GO:0016485">
    <property type="term" value="P:protein processing"/>
    <property type="evidence" value="ECO:0000318"/>
    <property type="project" value="GO_Central"/>
</dbReference>
<dbReference type="GO" id="GO:0016055">
    <property type="term" value="P:Wnt signaling pathway"/>
    <property type="evidence" value="ECO:0007669"/>
    <property type="project" value="Ensembl"/>
</dbReference>
<dbReference type="CDD" id="cd03865">
    <property type="entry name" value="M14_CPE"/>
    <property type="match status" value="1"/>
</dbReference>
<dbReference type="CDD" id="cd11308">
    <property type="entry name" value="Peptidase_M14NE-CP-C_like"/>
    <property type="match status" value="1"/>
</dbReference>
<dbReference type="FunFam" id="2.60.40.1120:FF:000004">
    <property type="entry name" value="Carboxypeptidase E"/>
    <property type="match status" value="1"/>
</dbReference>
<dbReference type="FunFam" id="3.40.630.10:FF:000013">
    <property type="entry name" value="carboxypeptidase N catalytic chain"/>
    <property type="match status" value="1"/>
</dbReference>
<dbReference type="Gene3D" id="2.60.40.1120">
    <property type="entry name" value="Carboxypeptidase-like, regulatory domain"/>
    <property type="match status" value="1"/>
</dbReference>
<dbReference type="Gene3D" id="3.40.630.10">
    <property type="entry name" value="Zn peptidases"/>
    <property type="match status" value="1"/>
</dbReference>
<dbReference type="InterPro" id="IPR008969">
    <property type="entry name" value="CarboxyPept-like_regulatory"/>
</dbReference>
<dbReference type="InterPro" id="IPR034232">
    <property type="entry name" value="M14_CPE_CPD"/>
</dbReference>
<dbReference type="InterPro" id="IPR000834">
    <property type="entry name" value="Peptidase_M14"/>
</dbReference>
<dbReference type="InterPro" id="IPR050753">
    <property type="entry name" value="Peptidase_M14_domain"/>
</dbReference>
<dbReference type="PANTHER" id="PTHR11532:SF92">
    <property type="entry name" value="CARBOXYPEPTIDASE E"/>
    <property type="match status" value="1"/>
</dbReference>
<dbReference type="PANTHER" id="PTHR11532">
    <property type="entry name" value="PROTEASE M14 CARBOXYPEPTIDASE"/>
    <property type="match status" value="1"/>
</dbReference>
<dbReference type="Pfam" id="PF13620">
    <property type="entry name" value="CarboxypepD_reg"/>
    <property type="match status" value="1"/>
</dbReference>
<dbReference type="Pfam" id="PF00246">
    <property type="entry name" value="Peptidase_M14"/>
    <property type="match status" value="1"/>
</dbReference>
<dbReference type="PRINTS" id="PR00765">
    <property type="entry name" value="CRBOXYPTASEA"/>
</dbReference>
<dbReference type="SMART" id="SM00631">
    <property type="entry name" value="Zn_pept"/>
    <property type="match status" value="1"/>
</dbReference>
<dbReference type="SUPFAM" id="SSF49464">
    <property type="entry name" value="Carboxypeptidase regulatory domain-like"/>
    <property type="match status" value="1"/>
</dbReference>
<dbReference type="SUPFAM" id="SSF53187">
    <property type="entry name" value="Zn-dependent exopeptidases"/>
    <property type="match status" value="1"/>
</dbReference>
<dbReference type="PROSITE" id="PS00132">
    <property type="entry name" value="CARBOXYPEPT_ZN_1"/>
    <property type="match status" value="1"/>
</dbReference>
<dbReference type="PROSITE" id="PS00133">
    <property type="entry name" value="CARBOXYPEPT_ZN_2"/>
    <property type="match status" value="1"/>
</dbReference>
<dbReference type="PROSITE" id="PS52035">
    <property type="entry name" value="PEPTIDASE_M14"/>
    <property type="match status" value="1"/>
</dbReference>
<keyword id="KW-0121">Carboxypeptidase</keyword>
<keyword id="KW-0165">Cleavage on pair of basic residues</keyword>
<keyword id="KW-0968">Cytoplasmic vesicle</keyword>
<keyword id="KW-0903">Direct protein sequencing</keyword>
<keyword id="KW-0325">Glycoprotein</keyword>
<keyword id="KW-0378">Hydrolase</keyword>
<keyword id="KW-0472">Membrane</keyword>
<keyword id="KW-0479">Metal-binding</keyword>
<keyword id="KW-0482">Metalloprotease</keyword>
<keyword id="KW-0645">Protease</keyword>
<keyword id="KW-1185">Reference proteome</keyword>
<keyword id="KW-0964">Secreted</keyword>
<keyword id="KW-0732">Signal</keyword>
<keyword id="KW-0862">Zinc</keyword>
<keyword id="KW-0865">Zymogen</keyword>
<evidence type="ECO:0000250" key="1">
    <source>
        <dbReference type="UniProtKB" id="P00730"/>
    </source>
</evidence>
<evidence type="ECO:0000250" key="2">
    <source>
        <dbReference type="UniProtKB" id="P15087"/>
    </source>
</evidence>
<evidence type="ECO:0000250" key="3">
    <source>
        <dbReference type="UniProtKB" id="Q00493"/>
    </source>
</evidence>
<evidence type="ECO:0000255" key="4"/>
<evidence type="ECO:0000255" key="5">
    <source>
        <dbReference type="PROSITE-ProRule" id="PRU01379"/>
    </source>
</evidence>
<evidence type="ECO:0000269" key="6">
    <source>
    </source>
</evidence>
<evidence type="ECO:0000269" key="7">
    <source ref="4"/>
</evidence>
<evidence type="ECO:0000305" key="8"/>
<gene>
    <name type="primary">CPE</name>
</gene>